<reference key="1">
    <citation type="journal article" date="2007" name="ISME J.">
        <title>Population level functional diversity in a microbial community revealed by comparative genomic and metagenomic analyses.</title>
        <authorList>
            <person name="Bhaya D."/>
            <person name="Grossman A.R."/>
            <person name="Steunou A.-S."/>
            <person name="Khuri N."/>
            <person name="Cohan F.M."/>
            <person name="Hamamura N."/>
            <person name="Melendrez M.C."/>
            <person name="Bateson M.M."/>
            <person name="Ward D.M."/>
            <person name="Heidelberg J.F."/>
        </authorList>
    </citation>
    <scope>NUCLEOTIDE SEQUENCE [LARGE SCALE GENOMIC DNA]</scope>
    <source>
        <strain>JA-3-3Ab</strain>
    </source>
</reference>
<name>NU1C_SYNJA</name>
<protein>
    <recommendedName>
        <fullName evidence="1">NAD(P)H-quinone oxidoreductase subunit 1</fullName>
        <ecNumber evidence="1">7.1.1.-</ecNumber>
    </recommendedName>
    <alternativeName>
        <fullName evidence="1">NAD(P)H dehydrogenase I subunit 1</fullName>
    </alternativeName>
    <alternativeName>
        <fullName evidence="1">NDH-1 subunit 1</fullName>
    </alternativeName>
    <alternativeName>
        <fullName evidence="1">NDH-A</fullName>
    </alternativeName>
</protein>
<proteinExistence type="inferred from homology"/>
<dbReference type="EC" id="7.1.1.-" evidence="1"/>
<dbReference type="EMBL" id="CP000239">
    <property type="protein sequence ID" value="ABC98955.1"/>
    <property type="molecule type" value="Genomic_DNA"/>
</dbReference>
<dbReference type="RefSeq" id="WP_011429639.1">
    <property type="nucleotide sequence ID" value="NC_007775.1"/>
</dbReference>
<dbReference type="SMR" id="Q2JWB3"/>
<dbReference type="STRING" id="321327.CYA_0745"/>
<dbReference type="KEGG" id="cya:CYA_0745"/>
<dbReference type="eggNOG" id="COG1005">
    <property type="taxonomic scope" value="Bacteria"/>
</dbReference>
<dbReference type="HOGENOM" id="CLU_015134_0_1_3"/>
<dbReference type="OrthoDB" id="9803734at2"/>
<dbReference type="Proteomes" id="UP000008818">
    <property type="component" value="Chromosome"/>
</dbReference>
<dbReference type="GO" id="GO:0031676">
    <property type="term" value="C:plasma membrane-derived thylakoid membrane"/>
    <property type="evidence" value="ECO:0007669"/>
    <property type="project" value="UniProtKB-SubCell"/>
</dbReference>
<dbReference type="GO" id="GO:0003954">
    <property type="term" value="F:NADH dehydrogenase activity"/>
    <property type="evidence" value="ECO:0007669"/>
    <property type="project" value="TreeGrafter"/>
</dbReference>
<dbReference type="GO" id="GO:0016655">
    <property type="term" value="F:oxidoreductase activity, acting on NAD(P)H, quinone or similar compound as acceptor"/>
    <property type="evidence" value="ECO:0007669"/>
    <property type="project" value="UniProtKB-UniRule"/>
</dbReference>
<dbReference type="GO" id="GO:0048038">
    <property type="term" value="F:quinone binding"/>
    <property type="evidence" value="ECO:0007669"/>
    <property type="project" value="UniProtKB-KW"/>
</dbReference>
<dbReference type="GO" id="GO:0009060">
    <property type="term" value="P:aerobic respiration"/>
    <property type="evidence" value="ECO:0007669"/>
    <property type="project" value="TreeGrafter"/>
</dbReference>
<dbReference type="GO" id="GO:0019684">
    <property type="term" value="P:photosynthesis, light reaction"/>
    <property type="evidence" value="ECO:0007669"/>
    <property type="project" value="UniProtKB-UniRule"/>
</dbReference>
<dbReference type="HAMAP" id="MF_01350">
    <property type="entry name" value="NDH1_NuoH"/>
    <property type="match status" value="1"/>
</dbReference>
<dbReference type="InterPro" id="IPR001694">
    <property type="entry name" value="NADH_UbQ_OxRdtase_su1/FPO"/>
</dbReference>
<dbReference type="InterPro" id="IPR018086">
    <property type="entry name" value="NADH_UbQ_OxRdtase_su1_CS"/>
</dbReference>
<dbReference type="NCBIfam" id="NF004741">
    <property type="entry name" value="PRK06076.1-2"/>
    <property type="match status" value="1"/>
</dbReference>
<dbReference type="NCBIfam" id="NF004744">
    <property type="entry name" value="PRK06076.1-5"/>
    <property type="match status" value="1"/>
</dbReference>
<dbReference type="PANTHER" id="PTHR11432">
    <property type="entry name" value="NADH DEHYDROGENASE SUBUNIT 1"/>
    <property type="match status" value="1"/>
</dbReference>
<dbReference type="PANTHER" id="PTHR11432:SF3">
    <property type="entry name" value="NADH-UBIQUINONE OXIDOREDUCTASE CHAIN 1"/>
    <property type="match status" value="1"/>
</dbReference>
<dbReference type="Pfam" id="PF00146">
    <property type="entry name" value="NADHdh"/>
    <property type="match status" value="1"/>
</dbReference>
<dbReference type="PROSITE" id="PS00668">
    <property type="entry name" value="COMPLEX1_ND1_2"/>
    <property type="match status" value="1"/>
</dbReference>
<keyword id="KW-0472">Membrane</keyword>
<keyword id="KW-0520">NAD</keyword>
<keyword id="KW-0521">NADP</keyword>
<keyword id="KW-0618">Plastoquinone</keyword>
<keyword id="KW-0874">Quinone</keyword>
<keyword id="KW-0793">Thylakoid</keyword>
<keyword id="KW-1278">Translocase</keyword>
<keyword id="KW-0812">Transmembrane</keyword>
<keyword id="KW-1133">Transmembrane helix</keyword>
<comment type="function">
    <text evidence="1">NDH-1 shuttles electrons from an unknown electron donor, via FMN and iron-sulfur (Fe-S) centers, to quinones in the respiratory and/or the photosynthetic chain. The immediate electron acceptor for the enzyme in this species is believed to be plastoquinone. Couples the redox reaction to proton translocation, and thus conserves the redox energy in a proton gradient.</text>
</comment>
<comment type="catalytic activity">
    <reaction evidence="1">
        <text>a plastoquinone + NADH + (n+1) H(+)(in) = a plastoquinol + NAD(+) + n H(+)(out)</text>
        <dbReference type="Rhea" id="RHEA:42608"/>
        <dbReference type="Rhea" id="RHEA-COMP:9561"/>
        <dbReference type="Rhea" id="RHEA-COMP:9562"/>
        <dbReference type="ChEBI" id="CHEBI:15378"/>
        <dbReference type="ChEBI" id="CHEBI:17757"/>
        <dbReference type="ChEBI" id="CHEBI:57540"/>
        <dbReference type="ChEBI" id="CHEBI:57945"/>
        <dbReference type="ChEBI" id="CHEBI:62192"/>
    </reaction>
</comment>
<comment type="catalytic activity">
    <reaction evidence="1">
        <text>a plastoquinone + NADPH + (n+1) H(+)(in) = a plastoquinol + NADP(+) + n H(+)(out)</text>
        <dbReference type="Rhea" id="RHEA:42612"/>
        <dbReference type="Rhea" id="RHEA-COMP:9561"/>
        <dbReference type="Rhea" id="RHEA-COMP:9562"/>
        <dbReference type="ChEBI" id="CHEBI:15378"/>
        <dbReference type="ChEBI" id="CHEBI:17757"/>
        <dbReference type="ChEBI" id="CHEBI:57783"/>
        <dbReference type="ChEBI" id="CHEBI:58349"/>
        <dbReference type="ChEBI" id="CHEBI:62192"/>
    </reaction>
</comment>
<comment type="subunit">
    <text evidence="1">NDH-1 is composed of at least 11 different subunits.</text>
</comment>
<comment type="subcellular location">
    <subcellularLocation>
        <location evidence="1">Cellular thylakoid membrane</location>
        <topology evidence="1">Multi-pass membrane protein</topology>
    </subcellularLocation>
</comment>
<comment type="similarity">
    <text evidence="1">Belongs to the complex I subunit 1 family.</text>
</comment>
<sequence length="373" mass="40152">MTTAGIDLQLGFETALQNLGLSPGAAHALWVPLPMLLMVIAATLGVMVMTWLERKISAAAQQRIGPNMAGPQGVLIPIADGIKLLTKEDVLPSLADPVLFTLGPILVFLPVFLCYLVVPFGQNLLISNIAIGVFFLIATSSVQPIGLLMSGYGSNNKYSLLGGLRAAAQSISYELPLALSVLAVVLMSNGLDTVGIVEQQSGLGILSWNVWRQPIGFVIFLISALAETERIPFDLPEAEEELVAGYQTEYSGMKFALFYLGSYANLLLASLIAAVLYLGGWSFVVPVETIAAWLGIPLDNPFLQIGAAVLGILMTMVKAFIFVFLAILLRWTLPRVRIDQLLDLGWKFLLPVSFVNLLLTAALKLAFPTFFGG</sequence>
<accession>Q2JWB3</accession>
<evidence type="ECO:0000255" key="1">
    <source>
        <dbReference type="HAMAP-Rule" id="MF_01350"/>
    </source>
</evidence>
<organism>
    <name type="scientific">Synechococcus sp. (strain JA-3-3Ab)</name>
    <name type="common">Cyanobacteria bacterium Yellowstone A-Prime</name>
    <dbReference type="NCBI Taxonomy" id="321327"/>
    <lineage>
        <taxon>Bacteria</taxon>
        <taxon>Bacillati</taxon>
        <taxon>Cyanobacteriota</taxon>
        <taxon>Cyanophyceae</taxon>
        <taxon>Synechococcales</taxon>
        <taxon>Synechococcaceae</taxon>
        <taxon>Synechococcus</taxon>
    </lineage>
</organism>
<feature type="chain" id="PRO_0000240043" description="NAD(P)H-quinone oxidoreductase subunit 1">
    <location>
        <begin position="1"/>
        <end position="373"/>
    </location>
</feature>
<feature type="transmembrane region" description="Helical" evidence="1">
    <location>
        <begin position="29"/>
        <end position="49"/>
    </location>
</feature>
<feature type="transmembrane region" description="Helical" evidence="1">
    <location>
        <begin position="64"/>
        <end position="84"/>
    </location>
</feature>
<feature type="transmembrane region" description="Helical" evidence="1">
    <location>
        <begin position="98"/>
        <end position="118"/>
    </location>
</feature>
<feature type="transmembrane region" description="Helical" evidence="1">
    <location>
        <begin position="129"/>
        <end position="149"/>
    </location>
</feature>
<feature type="transmembrane region" description="Helical" evidence="1">
    <location>
        <begin position="177"/>
        <end position="197"/>
    </location>
</feature>
<feature type="transmembrane region" description="Helical" evidence="1">
    <location>
        <begin position="202"/>
        <end position="222"/>
    </location>
</feature>
<feature type="transmembrane region" description="Helical" evidence="1">
    <location>
        <begin position="267"/>
        <end position="287"/>
    </location>
</feature>
<feature type="transmembrane region" description="Helical" evidence="1">
    <location>
        <begin position="309"/>
        <end position="329"/>
    </location>
</feature>
<feature type="transmembrane region" description="Helical" evidence="1">
    <location>
        <begin position="348"/>
        <end position="368"/>
    </location>
</feature>
<gene>
    <name evidence="1" type="primary">ndhA</name>
    <name type="ordered locus">CYA_0745</name>
</gene>